<feature type="chain" id="PRO_1000003195" description="Ribosome-recycling factor">
    <location>
        <begin position="1"/>
        <end position="185"/>
    </location>
</feature>
<evidence type="ECO:0000255" key="1">
    <source>
        <dbReference type="HAMAP-Rule" id="MF_00040"/>
    </source>
</evidence>
<gene>
    <name evidence="1" type="primary">frr</name>
    <name type="ordered locus">Mfla_1527</name>
</gene>
<accession>Q1H142</accession>
<comment type="function">
    <text evidence="1">Responsible for the release of ribosomes from messenger RNA at the termination of protein biosynthesis. May increase the efficiency of translation by recycling ribosomes from one round of translation to another.</text>
</comment>
<comment type="subcellular location">
    <subcellularLocation>
        <location evidence="1">Cytoplasm</location>
    </subcellularLocation>
</comment>
<comment type="similarity">
    <text evidence="1">Belongs to the RRF family.</text>
</comment>
<proteinExistence type="inferred from homology"/>
<reference key="1">
    <citation type="submission" date="2006-03" db="EMBL/GenBank/DDBJ databases">
        <title>Complete sequence of Methylobacillus flagellatus KT.</title>
        <authorList>
            <consortium name="US DOE Joint Genome Institute"/>
            <person name="Copeland A."/>
            <person name="Lucas S."/>
            <person name="Lapidus A."/>
            <person name="Barry K."/>
            <person name="Detter J.C."/>
            <person name="Glavina del Rio T."/>
            <person name="Hammon N."/>
            <person name="Israni S."/>
            <person name="Dalin E."/>
            <person name="Tice H."/>
            <person name="Pitluck S."/>
            <person name="Brettin T."/>
            <person name="Bruce D."/>
            <person name="Han C."/>
            <person name="Tapia R."/>
            <person name="Saunders E."/>
            <person name="Gilna P."/>
            <person name="Schmutz J."/>
            <person name="Larimer F."/>
            <person name="Land M."/>
            <person name="Kyrpides N."/>
            <person name="Anderson I."/>
            <person name="Richardson P."/>
        </authorList>
    </citation>
    <scope>NUCLEOTIDE SEQUENCE [LARGE SCALE GENOMIC DNA]</scope>
    <source>
        <strain>ATCC 51484 / DSM 6875 / VKM B-1610 / KT</strain>
    </source>
</reference>
<organism>
    <name type="scientific">Methylobacillus flagellatus (strain ATCC 51484 / DSM 6875 / VKM B-1610 / KT)</name>
    <dbReference type="NCBI Taxonomy" id="265072"/>
    <lineage>
        <taxon>Bacteria</taxon>
        <taxon>Pseudomonadati</taxon>
        <taxon>Pseudomonadota</taxon>
        <taxon>Betaproteobacteria</taxon>
        <taxon>Nitrosomonadales</taxon>
        <taxon>Methylophilaceae</taxon>
        <taxon>Methylobacillus</taxon>
    </lineage>
</organism>
<sequence length="185" mass="20813">MIQDVKNTAEQKMQKSIEALKADLSKVRTGRAHTGLLDHVQVEYYGSMVAINQVASVSLGDARTLNVQAYEKNMTPKVEKAIRDADLGLNPATNGDIIRVPMPMLTEERRRDLVKVVRSEAENAKVAIRNVRRDANDALKKLVKDKEISEDDERRAQDEVQKLTDKFVAEIDKLLQTKEAELMAV</sequence>
<keyword id="KW-0963">Cytoplasm</keyword>
<keyword id="KW-0648">Protein biosynthesis</keyword>
<keyword id="KW-1185">Reference proteome</keyword>
<name>RRF_METFK</name>
<dbReference type="EMBL" id="CP000284">
    <property type="protein sequence ID" value="ABE49795.1"/>
    <property type="molecule type" value="Genomic_DNA"/>
</dbReference>
<dbReference type="RefSeq" id="WP_011479749.1">
    <property type="nucleotide sequence ID" value="NC_007947.1"/>
</dbReference>
<dbReference type="SMR" id="Q1H142"/>
<dbReference type="STRING" id="265072.Mfla_1527"/>
<dbReference type="KEGG" id="mfa:Mfla_1527"/>
<dbReference type="eggNOG" id="COG0233">
    <property type="taxonomic scope" value="Bacteria"/>
</dbReference>
<dbReference type="HOGENOM" id="CLU_073981_2_1_4"/>
<dbReference type="OrthoDB" id="9804006at2"/>
<dbReference type="Proteomes" id="UP000002440">
    <property type="component" value="Chromosome"/>
</dbReference>
<dbReference type="GO" id="GO:0005829">
    <property type="term" value="C:cytosol"/>
    <property type="evidence" value="ECO:0007669"/>
    <property type="project" value="GOC"/>
</dbReference>
<dbReference type="GO" id="GO:0043023">
    <property type="term" value="F:ribosomal large subunit binding"/>
    <property type="evidence" value="ECO:0007669"/>
    <property type="project" value="TreeGrafter"/>
</dbReference>
<dbReference type="GO" id="GO:0002184">
    <property type="term" value="P:cytoplasmic translational termination"/>
    <property type="evidence" value="ECO:0007669"/>
    <property type="project" value="TreeGrafter"/>
</dbReference>
<dbReference type="CDD" id="cd00520">
    <property type="entry name" value="RRF"/>
    <property type="match status" value="1"/>
</dbReference>
<dbReference type="FunFam" id="1.10.132.20:FF:000001">
    <property type="entry name" value="Ribosome-recycling factor"/>
    <property type="match status" value="1"/>
</dbReference>
<dbReference type="FunFam" id="3.30.1360.40:FF:000001">
    <property type="entry name" value="Ribosome-recycling factor"/>
    <property type="match status" value="1"/>
</dbReference>
<dbReference type="Gene3D" id="3.30.1360.40">
    <property type="match status" value="1"/>
</dbReference>
<dbReference type="Gene3D" id="1.10.132.20">
    <property type="entry name" value="Ribosome-recycling factor"/>
    <property type="match status" value="1"/>
</dbReference>
<dbReference type="HAMAP" id="MF_00040">
    <property type="entry name" value="RRF"/>
    <property type="match status" value="1"/>
</dbReference>
<dbReference type="InterPro" id="IPR002661">
    <property type="entry name" value="Ribosome_recyc_fac"/>
</dbReference>
<dbReference type="InterPro" id="IPR023584">
    <property type="entry name" value="Ribosome_recyc_fac_dom"/>
</dbReference>
<dbReference type="InterPro" id="IPR036191">
    <property type="entry name" value="RRF_sf"/>
</dbReference>
<dbReference type="NCBIfam" id="TIGR00496">
    <property type="entry name" value="frr"/>
    <property type="match status" value="1"/>
</dbReference>
<dbReference type="PANTHER" id="PTHR20982:SF3">
    <property type="entry name" value="MITOCHONDRIAL RIBOSOME RECYCLING FACTOR PSEUDO 1"/>
    <property type="match status" value="1"/>
</dbReference>
<dbReference type="PANTHER" id="PTHR20982">
    <property type="entry name" value="RIBOSOME RECYCLING FACTOR"/>
    <property type="match status" value="1"/>
</dbReference>
<dbReference type="Pfam" id="PF01765">
    <property type="entry name" value="RRF"/>
    <property type="match status" value="1"/>
</dbReference>
<dbReference type="SUPFAM" id="SSF55194">
    <property type="entry name" value="Ribosome recycling factor, RRF"/>
    <property type="match status" value="1"/>
</dbReference>
<protein>
    <recommendedName>
        <fullName evidence="1">Ribosome-recycling factor</fullName>
        <shortName evidence="1">RRF</shortName>
    </recommendedName>
    <alternativeName>
        <fullName evidence="1">Ribosome-releasing factor</fullName>
    </alternativeName>
</protein>